<organism>
    <name type="scientific">Xylella fastidiosa (strain M23)</name>
    <dbReference type="NCBI Taxonomy" id="405441"/>
    <lineage>
        <taxon>Bacteria</taxon>
        <taxon>Pseudomonadati</taxon>
        <taxon>Pseudomonadota</taxon>
        <taxon>Gammaproteobacteria</taxon>
        <taxon>Lysobacterales</taxon>
        <taxon>Lysobacteraceae</taxon>
        <taxon>Xylella</taxon>
    </lineage>
</organism>
<protein>
    <recommendedName>
        <fullName evidence="1">Phosphatidylglycerol--prolipoprotein diacylglyceryl transferase</fullName>
        <ecNumber evidence="1">2.5.1.145</ecNumber>
    </recommendedName>
</protein>
<reference key="1">
    <citation type="journal article" date="2010" name="J. Bacteriol.">
        <title>Whole genome sequences of two Xylella fastidiosa strains (M12 and M23) causing almond leaf scorch disease in California.</title>
        <authorList>
            <person name="Chen J."/>
            <person name="Xie G."/>
            <person name="Han S."/>
            <person name="Chertkov O."/>
            <person name="Sims D."/>
            <person name="Civerolo E.L."/>
        </authorList>
    </citation>
    <scope>NUCLEOTIDE SEQUENCE [LARGE SCALE GENOMIC DNA]</scope>
    <source>
        <strain>M23</strain>
    </source>
</reference>
<evidence type="ECO:0000255" key="1">
    <source>
        <dbReference type="HAMAP-Rule" id="MF_01147"/>
    </source>
</evidence>
<feature type="chain" id="PRO_1000137474" description="Phosphatidylglycerol--prolipoprotein diacylglyceryl transferase">
    <location>
        <begin position="1"/>
        <end position="301"/>
    </location>
</feature>
<feature type="transmembrane region" description="Helical" evidence="1">
    <location>
        <begin position="10"/>
        <end position="30"/>
    </location>
</feature>
<feature type="transmembrane region" description="Helical" evidence="1">
    <location>
        <begin position="57"/>
        <end position="77"/>
    </location>
</feature>
<feature type="transmembrane region" description="Helical" evidence="1">
    <location>
        <begin position="92"/>
        <end position="112"/>
    </location>
</feature>
<feature type="transmembrane region" description="Helical" evidence="1">
    <location>
        <begin position="119"/>
        <end position="139"/>
    </location>
</feature>
<feature type="transmembrane region" description="Helical" evidence="1">
    <location>
        <begin position="202"/>
        <end position="222"/>
    </location>
</feature>
<feature type="transmembrane region" description="Helical" evidence="1">
    <location>
        <begin position="230"/>
        <end position="250"/>
    </location>
</feature>
<feature type="transmembrane region" description="Helical" evidence="1">
    <location>
        <begin position="264"/>
        <end position="284"/>
    </location>
</feature>
<feature type="binding site" evidence="1">
    <location>
        <position position="140"/>
    </location>
    <ligand>
        <name>a 1,2-diacyl-sn-glycero-3-phospho-(1'-sn-glycerol)</name>
        <dbReference type="ChEBI" id="CHEBI:64716"/>
    </ligand>
</feature>
<keyword id="KW-0997">Cell inner membrane</keyword>
<keyword id="KW-1003">Cell membrane</keyword>
<keyword id="KW-0472">Membrane</keyword>
<keyword id="KW-0808">Transferase</keyword>
<keyword id="KW-0812">Transmembrane</keyword>
<keyword id="KW-1133">Transmembrane helix</keyword>
<accession>B2I6F1</accession>
<dbReference type="EC" id="2.5.1.145" evidence="1"/>
<dbReference type="EMBL" id="CP001011">
    <property type="protein sequence ID" value="ACB92861.1"/>
    <property type="molecule type" value="Genomic_DNA"/>
</dbReference>
<dbReference type="RefSeq" id="WP_004091059.1">
    <property type="nucleotide sequence ID" value="NC_010577.1"/>
</dbReference>
<dbReference type="SMR" id="B2I6F1"/>
<dbReference type="GeneID" id="93905182"/>
<dbReference type="KEGG" id="xfn:XfasM23_1450"/>
<dbReference type="HOGENOM" id="CLU_013386_1_0_6"/>
<dbReference type="UniPathway" id="UPA00664"/>
<dbReference type="Proteomes" id="UP000001698">
    <property type="component" value="Chromosome"/>
</dbReference>
<dbReference type="GO" id="GO:0005886">
    <property type="term" value="C:plasma membrane"/>
    <property type="evidence" value="ECO:0007669"/>
    <property type="project" value="UniProtKB-SubCell"/>
</dbReference>
<dbReference type="GO" id="GO:0008961">
    <property type="term" value="F:phosphatidylglycerol-prolipoprotein diacylglyceryl transferase activity"/>
    <property type="evidence" value="ECO:0007669"/>
    <property type="project" value="UniProtKB-UniRule"/>
</dbReference>
<dbReference type="GO" id="GO:0042158">
    <property type="term" value="P:lipoprotein biosynthetic process"/>
    <property type="evidence" value="ECO:0007669"/>
    <property type="project" value="UniProtKB-UniRule"/>
</dbReference>
<dbReference type="HAMAP" id="MF_01147">
    <property type="entry name" value="Lgt"/>
    <property type="match status" value="1"/>
</dbReference>
<dbReference type="InterPro" id="IPR001640">
    <property type="entry name" value="Lgt"/>
</dbReference>
<dbReference type="NCBIfam" id="TIGR00544">
    <property type="entry name" value="lgt"/>
    <property type="match status" value="1"/>
</dbReference>
<dbReference type="PANTHER" id="PTHR30589:SF0">
    <property type="entry name" value="PHOSPHATIDYLGLYCEROL--PROLIPOPROTEIN DIACYLGLYCERYL TRANSFERASE"/>
    <property type="match status" value="1"/>
</dbReference>
<dbReference type="PANTHER" id="PTHR30589">
    <property type="entry name" value="PROLIPOPROTEIN DIACYLGLYCERYL TRANSFERASE"/>
    <property type="match status" value="1"/>
</dbReference>
<dbReference type="Pfam" id="PF01790">
    <property type="entry name" value="LGT"/>
    <property type="match status" value="1"/>
</dbReference>
<dbReference type="PROSITE" id="PS01311">
    <property type="entry name" value="LGT"/>
    <property type="match status" value="1"/>
</dbReference>
<proteinExistence type="inferred from homology"/>
<sequence length="301" mass="33815">MIYLHAIDPIAFSLGPVKVHWYGLMYLAGFGAAWCLGRQRIQAGRLLGVNIDGFSDLLFYAMMGVVLGGRVGYMLFYAFHDFLQEPLLLFRVWEGGMSFHGGLIGVLLAVAWWSRRQRMHMFDVVDFCAPLVPVGLGFGRLGNFIGGELWGKLTHNGWGVIFPRAPLSDVPAGQLAMQDVINFVQIQEHYAAGLLGHYARHPSQLYEAFLEGLVMFIVLWLFSRKPRPRYAVSGLFALLYGVFRFLVEFVRMPDNGVYVAFGWLTRGQILSLPLIVIGLFLFWLSCRSPVLQPVPAPEVAK</sequence>
<gene>
    <name evidence="1" type="primary">lgt</name>
    <name type="ordered locus">XfasM23_1450</name>
</gene>
<name>LGT_XYLF2</name>
<comment type="function">
    <text evidence="1">Catalyzes the transfer of the diacylglyceryl group from phosphatidylglycerol to the sulfhydryl group of the N-terminal cysteine of a prolipoprotein, the first step in the formation of mature lipoproteins.</text>
</comment>
<comment type="catalytic activity">
    <reaction evidence="1">
        <text>L-cysteinyl-[prolipoprotein] + a 1,2-diacyl-sn-glycero-3-phospho-(1'-sn-glycerol) = an S-1,2-diacyl-sn-glyceryl-L-cysteinyl-[prolipoprotein] + sn-glycerol 1-phosphate + H(+)</text>
        <dbReference type="Rhea" id="RHEA:56712"/>
        <dbReference type="Rhea" id="RHEA-COMP:14679"/>
        <dbReference type="Rhea" id="RHEA-COMP:14680"/>
        <dbReference type="ChEBI" id="CHEBI:15378"/>
        <dbReference type="ChEBI" id="CHEBI:29950"/>
        <dbReference type="ChEBI" id="CHEBI:57685"/>
        <dbReference type="ChEBI" id="CHEBI:64716"/>
        <dbReference type="ChEBI" id="CHEBI:140658"/>
        <dbReference type="EC" id="2.5.1.145"/>
    </reaction>
</comment>
<comment type="pathway">
    <text evidence="1">Protein modification; lipoprotein biosynthesis (diacylglyceryl transfer).</text>
</comment>
<comment type="subcellular location">
    <subcellularLocation>
        <location evidence="1">Cell inner membrane</location>
        <topology evidence="1">Multi-pass membrane protein</topology>
    </subcellularLocation>
</comment>
<comment type="similarity">
    <text evidence="1">Belongs to the Lgt family.</text>
</comment>